<sequence>MEAIRQLEKEHMRLDLPDFSSGDSVKVHVKIKEGEKERIQVFEGVVLKRHNGSKSTAATFTVRKTSFGIGVERIFPLHSPSIDRIEVVKRGLVRQSRIYYFRKLTGKAAKIREKRDR</sequence>
<dbReference type="EMBL" id="CP000859">
    <property type="protein sequence ID" value="ABW68108.1"/>
    <property type="molecule type" value="Genomic_DNA"/>
</dbReference>
<dbReference type="RefSeq" id="WP_012175720.1">
    <property type="nucleotide sequence ID" value="NC_009943.1"/>
</dbReference>
<dbReference type="SMR" id="A8ZV18"/>
<dbReference type="STRING" id="96561.Dole_2304"/>
<dbReference type="KEGG" id="dol:Dole_2304"/>
<dbReference type="eggNOG" id="COG0335">
    <property type="taxonomic scope" value="Bacteria"/>
</dbReference>
<dbReference type="HOGENOM" id="CLU_103507_2_2_7"/>
<dbReference type="OrthoDB" id="9803541at2"/>
<dbReference type="Proteomes" id="UP000008561">
    <property type="component" value="Chromosome"/>
</dbReference>
<dbReference type="GO" id="GO:0022625">
    <property type="term" value="C:cytosolic large ribosomal subunit"/>
    <property type="evidence" value="ECO:0007669"/>
    <property type="project" value="TreeGrafter"/>
</dbReference>
<dbReference type="GO" id="GO:0003735">
    <property type="term" value="F:structural constituent of ribosome"/>
    <property type="evidence" value="ECO:0007669"/>
    <property type="project" value="InterPro"/>
</dbReference>
<dbReference type="GO" id="GO:0006412">
    <property type="term" value="P:translation"/>
    <property type="evidence" value="ECO:0007669"/>
    <property type="project" value="UniProtKB-UniRule"/>
</dbReference>
<dbReference type="FunFam" id="2.30.30.790:FF:000001">
    <property type="entry name" value="50S ribosomal protein L19"/>
    <property type="match status" value="1"/>
</dbReference>
<dbReference type="Gene3D" id="2.30.30.790">
    <property type="match status" value="1"/>
</dbReference>
<dbReference type="HAMAP" id="MF_00402">
    <property type="entry name" value="Ribosomal_bL19"/>
    <property type="match status" value="1"/>
</dbReference>
<dbReference type="InterPro" id="IPR001857">
    <property type="entry name" value="Ribosomal_bL19"/>
</dbReference>
<dbReference type="InterPro" id="IPR038657">
    <property type="entry name" value="Ribosomal_bL19_sf"/>
</dbReference>
<dbReference type="InterPro" id="IPR008991">
    <property type="entry name" value="Translation_prot_SH3-like_sf"/>
</dbReference>
<dbReference type="NCBIfam" id="TIGR01024">
    <property type="entry name" value="rplS_bact"/>
    <property type="match status" value="1"/>
</dbReference>
<dbReference type="PANTHER" id="PTHR15680:SF9">
    <property type="entry name" value="LARGE RIBOSOMAL SUBUNIT PROTEIN BL19M"/>
    <property type="match status" value="1"/>
</dbReference>
<dbReference type="PANTHER" id="PTHR15680">
    <property type="entry name" value="RIBOSOMAL PROTEIN L19"/>
    <property type="match status" value="1"/>
</dbReference>
<dbReference type="Pfam" id="PF01245">
    <property type="entry name" value="Ribosomal_L19"/>
    <property type="match status" value="1"/>
</dbReference>
<dbReference type="PIRSF" id="PIRSF002191">
    <property type="entry name" value="Ribosomal_L19"/>
    <property type="match status" value="1"/>
</dbReference>
<dbReference type="PRINTS" id="PR00061">
    <property type="entry name" value="RIBOSOMALL19"/>
</dbReference>
<dbReference type="SUPFAM" id="SSF50104">
    <property type="entry name" value="Translation proteins SH3-like domain"/>
    <property type="match status" value="1"/>
</dbReference>
<protein>
    <recommendedName>
        <fullName evidence="1">Large ribosomal subunit protein bL19</fullName>
    </recommendedName>
    <alternativeName>
        <fullName evidence="2">50S ribosomal protein L19</fullName>
    </alternativeName>
</protein>
<accession>A8ZV18</accession>
<comment type="function">
    <text evidence="1">This protein is located at the 30S-50S ribosomal subunit interface and may play a role in the structure and function of the aminoacyl-tRNA binding site.</text>
</comment>
<comment type="similarity">
    <text evidence="1">Belongs to the bacterial ribosomal protein bL19 family.</text>
</comment>
<feature type="chain" id="PRO_1000193822" description="Large ribosomal subunit protein bL19">
    <location>
        <begin position="1"/>
        <end position="117"/>
    </location>
</feature>
<proteinExistence type="inferred from homology"/>
<keyword id="KW-1185">Reference proteome</keyword>
<keyword id="KW-0687">Ribonucleoprotein</keyword>
<keyword id="KW-0689">Ribosomal protein</keyword>
<gene>
    <name evidence="1" type="primary">rplS</name>
    <name type="ordered locus">Dole_2304</name>
</gene>
<reference key="1">
    <citation type="submission" date="2007-10" db="EMBL/GenBank/DDBJ databases">
        <title>Complete sequence of Desulfococcus oleovorans Hxd3.</title>
        <authorList>
            <consortium name="US DOE Joint Genome Institute"/>
            <person name="Copeland A."/>
            <person name="Lucas S."/>
            <person name="Lapidus A."/>
            <person name="Barry K."/>
            <person name="Glavina del Rio T."/>
            <person name="Dalin E."/>
            <person name="Tice H."/>
            <person name="Pitluck S."/>
            <person name="Kiss H."/>
            <person name="Brettin T."/>
            <person name="Bruce D."/>
            <person name="Detter J.C."/>
            <person name="Han C."/>
            <person name="Schmutz J."/>
            <person name="Larimer F."/>
            <person name="Land M."/>
            <person name="Hauser L."/>
            <person name="Kyrpides N."/>
            <person name="Kim E."/>
            <person name="Wawrik B."/>
            <person name="Richardson P."/>
        </authorList>
    </citation>
    <scope>NUCLEOTIDE SEQUENCE [LARGE SCALE GENOMIC DNA]</scope>
    <source>
        <strain>DSM 6200 / JCM 39069 / Hxd3</strain>
    </source>
</reference>
<name>RL19_DESOH</name>
<organism>
    <name type="scientific">Desulfosudis oleivorans (strain DSM 6200 / JCM 39069 / Hxd3)</name>
    <name type="common">Desulfococcus oleovorans</name>
    <dbReference type="NCBI Taxonomy" id="96561"/>
    <lineage>
        <taxon>Bacteria</taxon>
        <taxon>Pseudomonadati</taxon>
        <taxon>Thermodesulfobacteriota</taxon>
        <taxon>Desulfobacteria</taxon>
        <taxon>Desulfobacterales</taxon>
        <taxon>Desulfosudaceae</taxon>
        <taxon>Desulfosudis</taxon>
    </lineage>
</organism>
<evidence type="ECO:0000255" key="1">
    <source>
        <dbReference type="HAMAP-Rule" id="MF_00402"/>
    </source>
</evidence>
<evidence type="ECO:0000305" key="2"/>